<comment type="function">
    <text evidence="1">Catalyzes the pyruvoyl-dependent decarboxylation of aspartate to produce beta-alanine.</text>
</comment>
<comment type="catalytic activity">
    <reaction evidence="1">
        <text>L-aspartate + H(+) = beta-alanine + CO2</text>
        <dbReference type="Rhea" id="RHEA:19497"/>
        <dbReference type="ChEBI" id="CHEBI:15378"/>
        <dbReference type="ChEBI" id="CHEBI:16526"/>
        <dbReference type="ChEBI" id="CHEBI:29991"/>
        <dbReference type="ChEBI" id="CHEBI:57966"/>
        <dbReference type="EC" id="4.1.1.11"/>
    </reaction>
</comment>
<comment type="cofactor">
    <cofactor evidence="1">
        <name>pyruvate</name>
        <dbReference type="ChEBI" id="CHEBI:15361"/>
    </cofactor>
    <text evidence="1">Binds 1 pyruvoyl group covalently per subunit.</text>
</comment>
<comment type="pathway">
    <text evidence="1">Cofactor biosynthesis; (R)-pantothenate biosynthesis; beta-alanine from L-aspartate: step 1/1.</text>
</comment>
<comment type="subunit">
    <text evidence="1">Heterooctamer of four alpha and four beta subunits.</text>
</comment>
<comment type="subcellular location">
    <subcellularLocation>
        <location evidence="1">Cytoplasm</location>
    </subcellularLocation>
</comment>
<comment type="PTM">
    <text evidence="1">Is synthesized initially as an inactive proenzyme, which is activated by self-cleavage at a specific serine bond to produce a beta-subunit with a hydroxyl group at its C-terminus and an alpha-subunit with a pyruvoyl group at its N-terminus.</text>
</comment>
<comment type="similarity">
    <text evidence="1">Belongs to the PanD family.</text>
</comment>
<gene>
    <name evidence="1" type="primary">panD</name>
    <name type="ordered locus">SYNAS_12360</name>
    <name type="ORF">SYN_00419</name>
</gene>
<protein>
    <recommendedName>
        <fullName evidence="1">Aspartate 1-decarboxylase</fullName>
        <ecNumber evidence="1">4.1.1.11</ecNumber>
    </recommendedName>
    <alternativeName>
        <fullName evidence="1">Aspartate alpha-decarboxylase</fullName>
    </alternativeName>
    <component>
        <recommendedName>
            <fullName evidence="1">Aspartate 1-decarboxylase beta chain</fullName>
        </recommendedName>
    </component>
    <component>
        <recommendedName>
            <fullName evidence="1">Aspartate 1-decarboxylase alpha chain</fullName>
        </recommendedName>
    </component>
</protein>
<proteinExistence type="inferred from homology"/>
<dbReference type="EC" id="4.1.1.11" evidence="1"/>
<dbReference type="EMBL" id="CP000252">
    <property type="protein sequence ID" value="ABC77115.1"/>
    <property type="molecule type" value="Genomic_DNA"/>
</dbReference>
<dbReference type="RefSeq" id="WP_011417144.1">
    <property type="nucleotide sequence ID" value="NC_007759.1"/>
</dbReference>
<dbReference type="SMR" id="Q2LSQ4"/>
<dbReference type="FunCoup" id="Q2LSQ4">
    <property type="interactions" value="312"/>
</dbReference>
<dbReference type="STRING" id="56780.SYN_00419"/>
<dbReference type="KEGG" id="sat:SYN_00419"/>
<dbReference type="eggNOG" id="COG0853">
    <property type="taxonomic scope" value="Bacteria"/>
</dbReference>
<dbReference type="HOGENOM" id="CLU_115305_2_0_7"/>
<dbReference type="InParanoid" id="Q2LSQ4"/>
<dbReference type="OrthoDB" id="9803983at2"/>
<dbReference type="UniPathway" id="UPA00028">
    <property type="reaction ID" value="UER00002"/>
</dbReference>
<dbReference type="Proteomes" id="UP000001933">
    <property type="component" value="Chromosome"/>
</dbReference>
<dbReference type="GO" id="GO:0005829">
    <property type="term" value="C:cytosol"/>
    <property type="evidence" value="ECO:0007669"/>
    <property type="project" value="TreeGrafter"/>
</dbReference>
<dbReference type="GO" id="GO:0004068">
    <property type="term" value="F:aspartate 1-decarboxylase activity"/>
    <property type="evidence" value="ECO:0007669"/>
    <property type="project" value="UniProtKB-UniRule"/>
</dbReference>
<dbReference type="GO" id="GO:0006523">
    <property type="term" value="P:alanine biosynthetic process"/>
    <property type="evidence" value="ECO:0007669"/>
    <property type="project" value="InterPro"/>
</dbReference>
<dbReference type="GO" id="GO:0015940">
    <property type="term" value="P:pantothenate biosynthetic process"/>
    <property type="evidence" value="ECO:0007669"/>
    <property type="project" value="UniProtKB-UniRule"/>
</dbReference>
<dbReference type="CDD" id="cd06919">
    <property type="entry name" value="Asp_decarbox"/>
    <property type="match status" value="1"/>
</dbReference>
<dbReference type="Gene3D" id="2.40.40.20">
    <property type="match status" value="1"/>
</dbReference>
<dbReference type="HAMAP" id="MF_00446">
    <property type="entry name" value="PanD"/>
    <property type="match status" value="1"/>
</dbReference>
<dbReference type="InterPro" id="IPR009010">
    <property type="entry name" value="Asp_de-COase-like_dom_sf"/>
</dbReference>
<dbReference type="InterPro" id="IPR003190">
    <property type="entry name" value="Asp_decarbox"/>
</dbReference>
<dbReference type="NCBIfam" id="TIGR00223">
    <property type="entry name" value="panD"/>
    <property type="match status" value="1"/>
</dbReference>
<dbReference type="PANTHER" id="PTHR21012">
    <property type="entry name" value="ASPARTATE 1-DECARBOXYLASE"/>
    <property type="match status" value="1"/>
</dbReference>
<dbReference type="PANTHER" id="PTHR21012:SF0">
    <property type="entry name" value="ASPARTATE 1-DECARBOXYLASE"/>
    <property type="match status" value="1"/>
</dbReference>
<dbReference type="Pfam" id="PF02261">
    <property type="entry name" value="Asp_decarbox"/>
    <property type="match status" value="1"/>
</dbReference>
<dbReference type="PIRSF" id="PIRSF006246">
    <property type="entry name" value="Asp_decarbox"/>
    <property type="match status" value="1"/>
</dbReference>
<dbReference type="SUPFAM" id="SSF50692">
    <property type="entry name" value="ADC-like"/>
    <property type="match status" value="1"/>
</dbReference>
<reference key="1">
    <citation type="journal article" date="2007" name="Proc. Natl. Acad. Sci. U.S.A.">
        <title>The genome of Syntrophus aciditrophicus: life at the thermodynamic limit of microbial growth.</title>
        <authorList>
            <person name="McInerney M.J."/>
            <person name="Rohlin L."/>
            <person name="Mouttaki H."/>
            <person name="Kim U."/>
            <person name="Krupp R.S."/>
            <person name="Rios-Hernandez L."/>
            <person name="Sieber J."/>
            <person name="Struchtemeyer C.G."/>
            <person name="Bhattacharyya A."/>
            <person name="Campbell J.W."/>
            <person name="Gunsalus R.P."/>
        </authorList>
    </citation>
    <scope>NUCLEOTIDE SEQUENCE [LARGE SCALE GENOMIC DNA]</scope>
    <source>
        <strain>SB</strain>
    </source>
</reference>
<evidence type="ECO:0000255" key="1">
    <source>
        <dbReference type="HAMAP-Rule" id="MF_00446"/>
    </source>
</evidence>
<keyword id="KW-0068">Autocatalytic cleavage</keyword>
<keyword id="KW-0963">Cytoplasm</keyword>
<keyword id="KW-0210">Decarboxylase</keyword>
<keyword id="KW-0456">Lyase</keyword>
<keyword id="KW-0566">Pantothenate biosynthesis</keyword>
<keyword id="KW-0670">Pyruvate</keyword>
<keyword id="KW-1185">Reference proteome</keyword>
<keyword id="KW-0704">Schiff base</keyword>
<keyword id="KW-0865">Zymogen</keyword>
<organism>
    <name type="scientific">Syntrophus aciditrophicus (strain SB)</name>
    <dbReference type="NCBI Taxonomy" id="56780"/>
    <lineage>
        <taxon>Bacteria</taxon>
        <taxon>Pseudomonadati</taxon>
        <taxon>Thermodesulfobacteriota</taxon>
        <taxon>Syntrophia</taxon>
        <taxon>Syntrophales</taxon>
        <taxon>Syntrophaceae</taxon>
        <taxon>Syntrophus</taxon>
    </lineage>
</organism>
<feature type="chain" id="PRO_0000236903" description="Aspartate 1-decarboxylase beta chain" evidence="1">
    <location>
        <begin position="1"/>
        <end position="24"/>
    </location>
</feature>
<feature type="chain" id="PRO_0000236904" description="Aspartate 1-decarboxylase alpha chain" evidence="1">
    <location>
        <begin position="25"/>
        <end position="116"/>
    </location>
</feature>
<feature type="active site" description="Schiff-base intermediate with substrate; via pyruvic acid" evidence="1">
    <location>
        <position position="25"/>
    </location>
</feature>
<feature type="active site" description="Proton donor" evidence="1">
    <location>
        <position position="58"/>
    </location>
</feature>
<feature type="binding site" evidence="1">
    <location>
        <position position="57"/>
    </location>
    <ligand>
        <name>substrate</name>
    </ligand>
</feature>
<feature type="binding site" evidence="1">
    <location>
        <begin position="73"/>
        <end position="75"/>
    </location>
    <ligand>
        <name>substrate</name>
    </ligand>
</feature>
<feature type="modified residue" description="Pyruvic acid (Ser)" evidence="1">
    <location>
        <position position="25"/>
    </location>
</feature>
<sequence length="116" mass="12754">MQRLMLKSKIHRATVTDADLHYEGSISIDEALMEAADLLPYEKVAIYDVNNGERFTTYVITGKRGSGVICLNGAAARKVAKGDLVIIASYVIVDGEEAKGWKPTCVFVDPENQIKH</sequence>
<name>PAND_SYNAS</name>
<accession>Q2LSQ4</accession>